<evidence type="ECO:0000255" key="1">
    <source>
        <dbReference type="HAMAP-Rule" id="MF_00456"/>
    </source>
</evidence>
<gene>
    <name evidence="1" type="primary">proB</name>
</gene>
<feature type="chain" id="PRO_0000109738" description="Glutamate 5-kinase">
    <location>
        <begin position="1"/>
        <end position="267"/>
    </location>
</feature>
<feature type="binding site" evidence="1">
    <location>
        <position position="14"/>
    </location>
    <ligand>
        <name>ATP</name>
        <dbReference type="ChEBI" id="CHEBI:30616"/>
    </ligand>
</feature>
<feature type="binding site" evidence="1">
    <location>
        <position position="54"/>
    </location>
    <ligand>
        <name>substrate</name>
    </ligand>
</feature>
<feature type="binding site" evidence="1">
    <location>
        <position position="141"/>
    </location>
    <ligand>
        <name>substrate</name>
    </ligand>
</feature>
<feature type="binding site" evidence="1">
    <location>
        <position position="157"/>
    </location>
    <ligand>
        <name>substrate</name>
    </ligand>
</feature>
<feature type="binding site" evidence="1">
    <location>
        <begin position="177"/>
        <end position="178"/>
    </location>
    <ligand>
        <name>ATP</name>
        <dbReference type="ChEBI" id="CHEBI:30616"/>
    </ligand>
</feature>
<feature type="binding site" evidence="1">
    <location>
        <begin position="219"/>
        <end position="225"/>
    </location>
    <ligand>
        <name>ATP</name>
        <dbReference type="ChEBI" id="CHEBI:30616"/>
    </ligand>
</feature>
<proteinExistence type="inferred from homology"/>
<organism>
    <name type="scientific">Streptococcus thermophilus</name>
    <dbReference type="NCBI Taxonomy" id="1308"/>
    <lineage>
        <taxon>Bacteria</taxon>
        <taxon>Bacillati</taxon>
        <taxon>Bacillota</taxon>
        <taxon>Bacilli</taxon>
        <taxon>Lactobacillales</taxon>
        <taxon>Streptococcaceae</taxon>
        <taxon>Streptococcus</taxon>
    </lineage>
</organism>
<name>PROB_STRTR</name>
<protein>
    <recommendedName>
        <fullName evidence="1">Glutamate 5-kinase</fullName>
        <ecNumber evidence="1">2.7.2.11</ecNumber>
    </recommendedName>
    <alternativeName>
        <fullName evidence="1">Gamma-glutamyl kinase</fullName>
        <shortName evidence="1">GK</shortName>
    </alternativeName>
</protein>
<sequence>MKRNFDSVKRLVIKIGTSSLVLPSGKINLEKIDQLAFVISSLHNKGIEVVLVSSGAMGFGLNVLDLEKRPAEVGKQQAVSSVGQVAMMSLYSQVFSHYQTKVSQLLLTRDVVEYSESLANAINAFESLFELGVVPIVNENDAVSVDEMDHATKFGDNDRLSAIVAKVVGADLLIMLSDIDGLFDKNPNVYEDATLRSYVPEITEEILASAGGAGSKFGTGGMMSKIKSAQMVFENQSQMVLMNGENPRDILRVLEGAKIGTLFKQED</sequence>
<accession>P96488</accession>
<keyword id="KW-0028">Amino-acid biosynthesis</keyword>
<keyword id="KW-0067">ATP-binding</keyword>
<keyword id="KW-0963">Cytoplasm</keyword>
<keyword id="KW-0418">Kinase</keyword>
<keyword id="KW-0547">Nucleotide-binding</keyword>
<keyword id="KW-0641">Proline biosynthesis</keyword>
<keyword id="KW-0808">Transferase</keyword>
<dbReference type="EC" id="2.7.2.11" evidence="1"/>
<dbReference type="EMBL" id="X92418">
    <property type="protein sequence ID" value="CAA63147.1"/>
    <property type="molecule type" value="Genomic_DNA"/>
</dbReference>
<dbReference type="SMR" id="P96488"/>
<dbReference type="eggNOG" id="COG0263">
    <property type="taxonomic scope" value="Bacteria"/>
</dbReference>
<dbReference type="UniPathway" id="UPA00098">
    <property type="reaction ID" value="UER00359"/>
</dbReference>
<dbReference type="GO" id="GO:0005829">
    <property type="term" value="C:cytosol"/>
    <property type="evidence" value="ECO:0007669"/>
    <property type="project" value="TreeGrafter"/>
</dbReference>
<dbReference type="GO" id="GO:0005524">
    <property type="term" value="F:ATP binding"/>
    <property type="evidence" value="ECO:0007669"/>
    <property type="project" value="UniProtKB-KW"/>
</dbReference>
<dbReference type="GO" id="GO:0004349">
    <property type="term" value="F:glutamate 5-kinase activity"/>
    <property type="evidence" value="ECO:0007669"/>
    <property type="project" value="UniProtKB-UniRule"/>
</dbReference>
<dbReference type="GO" id="GO:0055129">
    <property type="term" value="P:L-proline biosynthetic process"/>
    <property type="evidence" value="ECO:0007669"/>
    <property type="project" value="UniProtKB-UniRule"/>
</dbReference>
<dbReference type="CDD" id="cd04242">
    <property type="entry name" value="AAK_G5K_ProB"/>
    <property type="match status" value="1"/>
</dbReference>
<dbReference type="FunFam" id="3.40.1160.10:FF:000018">
    <property type="entry name" value="Glutamate 5-kinase"/>
    <property type="match status" value="1"/>
</dbReference>
<dbReference type="Gene3D" id="3.40.1160.10">
    <property type="entry name" value="Acetylglutamate kinase-like"/>
    <property type="match status" value="1"/>
</dbReference>
<dbReference type="HAMAP" id="MF_00456">
    <property type="entry name" value="ProB"/>
    <property type="match status" value="1"/>
</dbReference>
<dbReference type="InterPro" id="IPR036393">
    <property type="entry name" value="AceGlu_kinase-like_sf"/>
</dbReference>
<dbReference type="InterPro" id="IPR001048">
    <property type="entry name" value="Asp/Glu/Uridylate_kinase"/>
</dbReference>
<dbReference type="InterPro" id="IPR041739">
    <property type="entry name" value="G5K_ProB"/>
</dbReference>
<dbReference type="InterPro" id="IPR001057">
    <property type="entry name" value="Glu/AcGlu_kinase"/>
</dbReference>
<dbReference type="InterPro" id="IPR011529">
    <property type="entry name" value="Glu_5kinase"/>
</dbReference>
<dbReference type="InterPro" id="IPR005715">
    <property type="entry name" value="Glu_5kinase/COase_Synthase"/>
</dbReference>
<dbReference type="InterPro" id="IPR019797">
    <property type="entry name" value="Glutamate_5-kinase_CS"/>
</dbReference>
<dbReference type="NCBIfam" id="TIGR01027">
    <property type="entry name" value="proB"/>
    <property type="match status" value="1"/>
</dbReference>
<dbReference type="PANTHER" id="PTHR43654">
    <property type="entry name" value="GLUTAMATE 5-KINASE"/>
    <property type="match status" value="1"/>
</dbReference>
<dbReference type="PANTHER" id="PTHR43654:SF1">
    <property type="entry name" value="ISOPENTENYL PHOSPHATE KINASE"/>
    <property type="match status" value="1"/>
</dbReference>
<dbReference type="Pfam" id="PF00696">
    <property type="entry name" value="AA_kinase"/>
    <property type="match status" value="1"/>
</dbReference>
<dbReference type="PIRSF" id="PIRSF000729">
    <property type="entry name" value="GK"/>
    <property type="match status" value="1"/>
</dbReference>
<dbReference type="PRINTS" id="PR00474">
    <property type="entry name" value="GLU5KINASE"/>
</dbReference>
<dbReference type="SUPFAM" id="SSF53633">
    <property type="entry name" value="Carbamate kinase-like"/>
    <property type="match status" value="1"/>
</dbReference>
<dbReference type="PROSITE" id="PS00902">
    <property type="entry name" value="GLUTAMATE_5_KINASE"/>
    <property type="match status" value="1"/>
</dbReference>
<comment type="function">
    <text evidence="1">Catalyzes the transfer of a phosphate group to glutamate to form L-glutamate 5-phosphate.</text>
</comment>
<comment type="catalytic activity">
    <reaction evidence="1">
        <text>L-glutamate + ATP = L-glutamyl 5-phosphate + ADP</text>
        <dbReference type="Rhea" id="RHEA:14877"/>
        <dbReference type="ChEBI" id="CHEBI:29985"/>
        <dbReference type="ChEBI" id="CHEBI:30616"/>
        <dbReference type="ChEBI" id="CHEBI:58274"/>
        <dbReference type="ChEBI" id="CHEBI:456216"/>
        <dbReference type="EC" id="2.7.2.11"/>
    </reaction>
</comment>
<comment type="pathway">
    <text evidence="1">Amino-acid biosynthesis; L-proline biosynthesis; L-glutamate 5-semialdehyde from L-glutamate: step 1/2.</text>
</comment>
<comment type="subcellular location">
    <subcellularLocation>
        <location evidence="1">Cytoplasm</location>
    </subcellularLocation>
</comment>
<comment type="similarity">
    <text evidence="1">Belongs to the glutamate 5-kinase family.</text>
</comment>
<reference key="1">
    <citation type="journal article" date="1996" name="Microbiology">
        <title>Proline biosynthesis in Streptococcus thermophilus: characterization of the proBA operon and its products.</title>
        <authorList>
            <person name="Limauro D."/>
            <person name="Falciatore A."/>
            <person name="Basso A.L."/>
            <person name="Forlani G."/>
            <person name="de Felice M."/>
        </authorList>
    </citation>
    <scope>NUCLEOTIDE SEQUENCE [GENOMIC DNA]</scope>
    <source>
        <strain>ATCC 19258 / DSM 20617 / LMG 6896 / NCDO 573 / NCIMB 8510</strain>
    </source>
</reference>